<protein>
    <recommendedName>
        <fullName evidence="1">Phosphoenolpyruvate carboxykinase (ATP)</fullName>
        <shortName evidence="1">PCK</shortName>
        <shortName evidence="1">PEP carboxykinase</shortName>
        <shortName evidence="1">PEPCK</shortName>
        <ecNumber evidence="1">4.1.1.49</ecNumber>
    </recommendedName>
</protein>
<name>PCKA_ECOL6</name>
<gene>
    <name evidence="1" type="primary">pckA</name>
    <name type="ordered locus">c4176</name>
</gene>
<sequence>MRVNNGLTPQELEAYGISDVHDIVYNPSYDLLYQEELDPSLTGYERGVLTNLGAVAVDTGIFTGRSPKDKYIVRDDTTRDTFWWADKGKGKNDNKPLSPETWQHLKGLVTRQLSGKRLFVVDAFCGANPDTRLSVRFITEVAWQAHFVKNMFIRPSDEELAGFKPDFIVMNGAKCTNPQWKEQGLNSENFVAFNLTERMQLIGGTWYGGEMKKGMFSMMNYLLPLKGIASMHCSANVGEKGDVAVFFGLSGTGKTTLSTDPKRRLIGDDEHGWDDDGVFNFEGGCYAKTIKLSKEAEPEIYNAIRRDALLENVTVREDGTIDFDDGSKTENTRVSYPIYHIDNIVKPVSKAGHATKVIFLTADAFGVLPPVSRLTADQTQYHFLSGFTAKLAGTERGITEPTPTFSACFGAAFLSLHPTQYAEVLVKRMQAAGAQAYLVNTGWNGTGKRISIKDTRAIIDAILNGSLDNAETFTLPMFNLAIPTELPGVDTKLLDPRNTYASPEQWQEKAETLAKLFIDNFDKYTDTPAGAALVAAGPKL</sequence>
<keyword id="KW-0007">Acetylation</keyword>
<keyword id="KW-0067">ATP-binding</keyword>
<keyword id="KW-0963">Cytoplasm</keyword>
<keyword id="KW-0210">Decarboxylase</keyword>
<keyword id="KW-0312">Gluconeogenesis</keyword>
<keyword id="KW-0456">Lyase</keyword>
<keyword id="KW-0464">Manganese</keyword>
<keyword id="KW-0479">Metal-binding</keyword>
<keyword id="KW-0547">Nucleotide-binding</keyword>
<keyword id="KW-1185">Reference proteome</keyword>
<reference key="1">
    <citation type="journal article" date="2002" name="Proc. Natl. Acad. Sci. U.S.A.">
        <title>Extensive mosaic structure revealed by the complete genome sequence of uropathogenic Escherichia coli.</title>
        <authorList>
            <person name="Welch R.A."/>
            <person name="Burland V."/>
            <person name="Plunkett G. III"/>
            <person name="Redford P."/>
            <person name="Roesch P."/>
            <person name="Rasko D."/>
            <person name="Buckles E.L."/>
            <person name="Liou S.-R."/>
            <person name="Boutin A."/>
            <person name="Hackett J."/>
            <person name="Stroud D."/>
            <person name="Mayhew G.F."/>
            <person name="Rose D.J."/>
            <person name="Zhou S."/>
            <person name="Schwartz D.C."/>
            <person name="Perna N.T."/>
            <person name="Mobley H.L.T."/>
            <person name="Donnenberg M.S."/>
            <person name="Blattner F.R."/>
        </authorList>
    </citation>
    <scope>NUCLEOTIDE SEQUENCE [LARGE SCALE GENOMIC DNA]</scope>
    <source>
        <strain>CFT073 / ATCC 700928 / UPEC</strain>
    </source>
</reference>
<evidence type="ECO:0000255" key="1">
    <source>
        <dbReference type="HAMAP-Rule" id="MF_00453"/>
    </source>
</evidence>
<evidence type="ECO:0000305" key="2"/>
<accession>Q8FCU4</accession>
<organism>
    <name type="scientific">Escherichia coli O6:H1 (strain CFT073 / ATCC 700928 / UPEC)</name>
    <dbReference type="NCBI Taxonomy" id="199310"/>
    <lineage>
        <taxon>Bacteria</taxon>
        <taxon>Pseudomonadati</taxon>
        <taxon>Pseudomonadota</taxon>
        <taxon>Gammaproteobacteria</taxon>
        <taxon>Enterobacterales</taxon>
        <taxon>Enterobacteriaceae</taxon>
        <taxon>Escherichia</taxon>
    </lineage>
</organism>
<proteinExistence type="inferred from homology"/>
<comment type="function">
    <text evidence="1">Involved in the gluconeogenesis. Catalyzes the conversion of oxaloacetate (OAA) to phosphoenolpyruvate (PEP) through direct phosphoryl transfer between the nucleoside triphosphate and OAA.</text>
</comment>
<comment type="catalytic activity">
    <reaction evidence="1">
        <text>oxaloacetate + ATP = phosphoenolpyruvate + ADP + CO2</text>
        <dbReference type="Rhea" id="RHEA:18617"/>
        <dbReference type="ChEBI" id="CHEBI:16452"/>
        <dbReference type="ChEBI" id="CHEBI:16526"/>
        <dbReference type="ChEBI" id="CHEBI:30616"/>
        <dbReference type="ChEBI" id="CHEBI:58702"/>
        <dbReference type="ChEBI" id="CHEBI:456216"/>
        <dbReference type="EC" id="4.1.1.49"/>
    </reaction>
</comment>
<comment type="cofactor">
    <cofactor evidence="1">
        <name>Mn(2+)</name>
        <dbReference type="ChEBI" id="CHEBI:29035"/>
    </cofactor>
    <text evidence="1">Binds 1 Mn(2+) ion per subunit.</text>
</comment>
<comment type="pathway">
    <text evidence="1">Carbohydrate biosynthesis; gluconeogenesis.</text>
</comment>
<comment type="subunit">
    <text evidence="1">Monomer.</text>
</comment>
<comment type="subcellular location">
    <subcellularLocation>
        <location evidence="1">Cytoplasm</location>
    </subcellularLocation>
</comment>
<comment type="similarity">
    <text evidence="1">Belongs to the phosphoenolpyruvate carboxykinase (ATP) family.</text>
</comment>
<comment type="sequence caution" evidence="2">
    <conflict type="erroneous initiation">
        <sequence resource="EMBL-CDS" id="AAN82614"/>
    </conflict>
    <text>Extended N-terminus.</text>
</comment>
<dbReference type="EC" id="4.1.1.49" evidence="1"/>
<dbReference type="EMBL" id="AE014075">
    <property type="protein sequence ID" value="AAN82614.1"/>
    <property type="status" value="ALT_INIT"/>
    <property type="molecule type" value="Genomic_DNA"/>
</dbReference>
<dbReference type="RefSeq" id="WP_001304925.1">
    <property type="nucleotide sequence ID" value="NZ_CP051263.1"/>
</dbReference>
<dbReference type="SMR" id="Q8FCU4"/>
<dbReference type="STRING" id="199310.c4176"/>
<dbReference type="KEGG" id="ecc:c4176"/>
<dbReference type="eggNOG" id="COG1866">
    <property type="taxonomic scope" value="Bacteria"/>
</dbReference>
<dbReference type="HOGENOM" id="CLU_018247_0_1_6"/>
<dbReference type="UniPathway" id="UPA00138"/>
<dbReference type="Proteomes" id="UP000001410">
    <property type="component" value="Chromosome"/>
</dbReference>
<dbReference type="GO" id="GO:0005829">
    <property type="term" value="C:cytosol"/>
    <property type="evidence" value="ECO:0007669"/>
    <property type="project" value="TreeGrafter"/>
</dbReference>
<dbReference type="GO" id="GO:0005524">
    <property type="term" value="F:ATP binding"/>
    <property type="evidence" value="ECO:0007669"/>
    <property type="project" value="UniProtKB-UniRule"/>
</dbReference>
<dbReference type="GO" id="GO:0046872">
    <property type="term" value="F:metal ion binding"/>
    <property type="evidence" value="ECO:0007669"/>
    <property type="project" value="UniProtKB-KW"/>
</dbReference>
<dbReference type="GO" id="GO:0004612">
    <property type="term" value="F:phosphoenolpyruvate carboxykinase (ATP) activity"/>
    <property type="evidence" value="ECO:0007669"/>
    <property type="project" value="UniProtKB-UniRule"/>
</dbReference>
<dbReference type="GO" id="GO:0006094">
    <property type="term" value="P:gluconeogenesis"/>
    <property type="evidence" value="ECO:0007669"/>
    <property type="project" value="UniProtKB-UniRule"/>
</dbReference>
<dbReference type="CDD" id="cd00484">
    <property type="entry name" value="PEPCK_ATP"/>
    <property type="match status" value="1"/>
</dbReference>
<dbReference type="FunFam" id="2.170.8.10:FF:000001">
    <property type="entry name" value="Phosphoenolpyruvate carboxykinase (ATP)"/>
    <property type="match status" value="1"/>
</dbReference>
<dbReference type="FunFam" id="3.40.449.10:FF:000001">
    <property type="entry name" value="Phosphoenolpyruvate carboxykinase (ATP)"/>
    <property type="match status" value="1"/>
</dbReference>
<dbReference type="Gene3D" id="3.90.228.20">
    <property type="match status" value="1"/>
</dbReference>
<dbReference type="Gene3D" id="3.40.449.10">
    <property type="entry name" value="Phosphoenolpyruvate Carboxykinase, domain 1"/>
    <property type="match status" value="1"/>
</dbReference>
<dbReference type="Gene3D" id="2.170.8.10">
    <property type="entry name" value="Phosphoenolpyruvate Carboxykinase, domain 2"/>
    <property type="match status" value="1"/>
</dbReference>
<dbReference type="HAMAP" id="MF_00453">
    <property type="entry name" value="PEPCK_ATP"/>
    <property type="match status" value="1"/>
</dbReference>
<dbReference type="InterPro" id="IPR001272">
    <property type="entry name" value="PEP_carboxykinase_ATP"/>
</dbReference>
<dbReference type="InterPro" id="IPR013035">
    <property type="entry name" value="PEP_carboxykinase_C"/>
</dbReference>
<dbReference type="InterPro" id="IPR008210">
    <property type="entry name" value="PEP_carboxykinase_N"/>
</dbReference>
<dbReference type="InterPro" id="IPR015994">
    <property type="entry name" value="PEPCK_ATP_CS"/>
</dbReference>
<dbReference type="NCBIfam" id="TIGR00224">
    <property type="entry name" value="pckA"/>
    <property type="match status" value="1"/>
</dbReference>
<dbReference type="NCBIfam" id="NF006819">
    <property type="entry name" value="PRK09344.1-1"/>
    <property type="match status" value="1"/>
</dbReference>
<dbReference type="NCBIfam" id="NF006820">
    <property type="entry name" value="PRK09344.1-2"/>
    <property type="match status" value="1"/>
</dbReference>
<dbReference type="NCBIfam" id="NF006821">
    <property type="entry name" value="PRK09344.1-3"/>
    <property type="match status" value="1"/>
</dbReference>
<dbReference type="PANTHER" id="PTHR30031:SF0">
    <property type="entry name" value="PHOSPHOENOLPYRUVATE CARBOXYKINASE (ATP)"/>
    <property type="match status" value="1"/>
</dbReference>
<dbReference type="PANTHER" id="PTHR30031">
    <property type="entry name" value="PHOSPHOENOLPYRUVATE CARBOXYKINASE ATP"/>
    <property type="match status" value="1"/>
</dbReference>
<dbReference type="Pfam" id="PF01293">
    <property type="entry name" value="PEPCK_ATP"/>
    <property type="match status" value="1"/>
</dbReference>
<dbReference type="PIRSF" id="PIRSF006294">
    <property type="entry name" value="PEP_crbxkin"/>
    <property type="match status" value="1"/>
</dbReference>
<dbReference type="SUPFAM" id="SSF68923">
    <property type="entry name" value="PEP carboxykinase N-terminal domain"/>
    <property type="match status" value="1"/>
</dbReference>
<dbReference type="SUPFAM" id="SSF53795">
    <property type="entry name" value="PEP carboxykinase-like"/>
    <property type="match status" value="1"/>
</dbReference>
<dbReference type="PROSITE" id="PS00532">
    <property type="entry name" value="PEPCK_ATP"/>
    <property type="match status" value="1"/>
</dbReference>
<feature type="chain" id="PRO_0000203819" description="Phosphoenolpyruvate carboxykinase (ATP)">
    <location>
        <begin position="1"/>
        <end position="540"/>
    </location>
</feature>
<feature type="binding site" evidence="1">
    <location>
        <position position="65"/>
    </location>
    <ligand>
        <name>substrate</name>
    </ligand>
</feature>
<feature type="binding site" evidence="1">
    <location>
        <position position="207"/>
    </location>
    <ligand>
        <name>substrate</name>
    </ligand>
</feature>
<feature type="binding site" evidence="1">
    <location>
        <position position="213"/>
    </location>
    <ligand>
        <name>ATP</name>
        <dbReference type="ChEBI" id="CHEBI:30616"/>
    </ligand>
</feature>
<feature type="binding site" evidence="1">
    <location>
        <position position="213"/>
    </location>
    <ligand>
        <name>Mn(2+)</name>
        <dbReference type="ChEBI" id="CHEBI:29035"/>
    </ligand>
</feature>
<feature type="binding site" evidence="1">
    <location>
        <position position="213"/>
    </location>
    <ligand>
        <name>substrate</name>
    </ligand>
</feature>
<feature type="binding site" evidence="1">
    <location>
        <position position="232"/>
    </location>
    <ligand>
        <name>ATP</name>
        <dbReference type="ChEBI" id="CHEBI:30616"/>
    </ligand>
</feature>
<feature type="binding site" evidence="1">
    <location>
        <position position="232"/>
    </location>
    <ligand>
        <name>Mn(2+)</name>
        <dbReference type="ChEBI" id="CHEBI:29035"/>
    </ligand>
</feature>
<feature type="binding site" evidence="1">
    <location>
        <begin position="248"/>
        <end position="256"/>
    </location>
    <ligand>
        <name>ATP</name>
        <dbReference type="ChEBI" id="CHEBI:30616"/>
    </ligand>
</feature>
<feature type="binding site" evidence="1">
    <location>
        <position position="269"/>
    </location>
    <ligand>
        <name>Mn(2+)</name>
        <dbReference type="ChEBI" id="CHEBI:29035"/>
    </ligand>
</feature>
<feature type="binding site" evidence="1">
    <location>
        <position position="297"/>
    </location>
    <ligand>
        <name>ATP</name>
        <dbReference type="ChEBI" id="CHEBI:30616"/>
    </ligand>
</feature>
<feature type="binding site" evidence="1">
    <location>
        <position position="333"/>
    </location>
    <ligand>
        <name>ATP</name>
        <dbReference type="ChEBI" id="CHEBI:30616"/>
    </ligand>
</feature>
<feature type="binding site" evidence="1">
    <location>
        <position position="333"/>
    </location>
    <ligand>
        <name>substrate</name>
    </ligand>
</feature>
<feature type="binding site" evidence="1">
    <location>
        <begin position="449"/>
        <end position="450"/>
    </location>
    <ligand>
        <name>ATP</name>
        <dbReference type="ChEBI" id="CHEBI:30616"/>
    </ligand>
</feature>
<feature type="binding site" evidence="1">
    <location>
        <position position="455"/>
    </location>
    <ligand>
        <name>ATP</name>
        <dbReference type="ChEBI" id="CHEBI:30616"/>
    </ligand>
</feature>
<feature type="modified residue" description="N6-acetyllysine" evidence="1">
    <location>
        <position position="87"/>
    </location>
</feature>
<feature type="modified residue" description="N6-acetyllysine" evidence="1">
    <location>
        <position position="523"/>
    </location>
</feature>